<sequence>MTKKLYKIAVLPGDGIGPEIIQEAYKIIDVLQKKFSFNVKMHEYDIGGISIDKHGTALTQETIEGCENSDAILFGSVGGSKWDHLPEIEKPEKAGLLKLRKHFNLFANIRPCKLSQHLLDISPLKNSIIKKGIDLICIRELTGGIYFGKSNKITNIDDPYAFDTEIYFRSEIKRIAKIAFQIAQSRKKKIVSIDKANVLKSSILWRDTVNKMAYKFPNVKLEHMYIDNATMELIKNPSSFDVILCSNLFGDIISDECAAIIGSIGLLPSASLNKSGFGLYEPAGGSAPNIAGKTIANPIAQILSLSMLLKYSLHLPFLSSCIDEAVHEALVKKYMTMDISKNPQNFLKTNEIGDKISDLLAKKA</sequence>
<reference key="1">
    <citation type="journal article" date="1997" name="J. Bacteriol.">
        <title>Putative evolutionary origin of plasmids carrying the genes involved in leucine biosynthesis in Buchnera aphidicola (endosymbiont of aphids).</title>
        <authorList>
            <person name="van Ham R.C.H.J."/>
            <person name="Moya A."/>
            <person name="Latorre A."/>
        </authorList>
    </citation>
    <scope>NUCLEOTIDE SEQUENCE [GENOMIC DNA]</scope>
</reference>
<protein>
    <recommendedName>
        <fullName evidence="1">3-isopropylmalate dehydrogenase</fullName>
        <ecNumber evidence="1">1.1.1.85</ecNumber>
    </recommendedName>
    <alternativeName>
        <fullName evidence="1">3-IPM-DH</fullName>
    </alternativeName>
    <alternativeName>
        <fullName evidence="1">Beta-IPM dehydrogenase</fullName>
        <shortName evidence="1">IMDH</shortName>
    </alternativeName>
</protein>
<feature type="chain" id="PRO_0000083662" description="3-isopropylmalate dehydrogenase">
    <location>
        <begin position="1"/>
        <end position="364"/>
    </location>
</feature>
<feature type="binding site" evidence="1">
    <location>
        <begin position="79"/>
        <end position="92"/>
    </location>
    <ligand>
        <name>NAD(+)</name>
        <dbReference type="ChEBI" id="CHEBI:57540"/>
    </ligand>
</feature>
<feature type="binding site" evidence="1">
    <location>
        <position position="100"/>
    </location>
    <ligand>
        <name>substrate</name>
    </ligand>
</feature>
<feature type="binding site" evidence="1">
    <location>
        <position position="110"/>
    </location>
    <ligand>
        <name>substrate</name>
    </ligand>
</feature>
<feature type="binding site" evidence="1">
    <location>
        <position position="139"/>
    </location>
    <ligand>
        <name>substrate</name>
    </ligand>
</feature>
<feature type="binding site" evidence="1">
    <location>
        <position position="227"/>
    </location>
    <ligand>
        <name>Mg(2+)</name>
        <dbReference type="ChEBI" id="CHEBI:18420"/>
    </ligand>
</feature>
<feature type="binding site" evidence="1">
    <location>
        <position position="227"/>
    </location>
    <ligand>
        <name>substrate</name>
    </ligand>
</feature>
<feature type="binding site" evidence="1">
    <location>
        <position position="251"/>
    </location>
    <ligand>
        <name>Mg(2+)</name>
        <dbReference type="ChEBI" id="CHEBI:18420"/>
    </ligand>
</feature>
<feature type="binding site" evidence="1">
    <location>
        <position position="255"/>
    </location>
    <ligand>
        <name>Mg(2+)</name>
        <dbReference type="ChEBI" id="CHEBI:18420"/>
    </ligand>
</feature>
<feature type="binding site" evidence="1">
    <location>
        <begin position="285"/>
        <end position="297"/>
    </location>
    <ligand>
        <name>NAD(+)</name>
        <dbReference type="ChEBI" id="CHEBI:57540"/>
    </ligand>
</feature>
<feature type="site" description="Important for catalysis" evidence="1">
    <location>
        <position position="146"/>
    </location>
</feature>
<feature type="site" description="Important for catalysis" evidence="1">
    <location>
        <position position="195"/>
    </location>
</feature>
<keyword id="KW-0028">Amino-acid biosynthesis</keyword>
<keyword id="KW-0100">Branched-chain amino acid biosynthesis</keyword>
<keyword id="KW-0963">Cytoplasm</keyword>
<keyword id="KW-0432">Leucine biosynthesis</keyword>
<keyword id="KW-0460">Magnesium</keyword>
<keyword id="KW-0464">Manganese</keyword>
<keyword id="KW-0479">Metal-binding</keyword>
<keyword id="KW-0520">NAD</keyword>
<keyword id="KW-0560">Oxidoreductase</keyword>
<keyword id="KW-0614">Plasmid</keyword>
<proteinExistence type="inferred from homology"/>
<organism>
    <name type="scientific">Buchnera aphidicola subsp. Thelaxes suberi</name>
    <dbReference type="NCBI Taxonomy" id="98797"/>
    <lineage>
        <taxon>Bacteria</taxon>
        <taxon>Pseudomonadati</taxon>
        <taxon>Pseudomonadota</taxon>
        <taxon>Gammaproteobacteria</taxon>
        <taxon>Enterobacterales</taxon>
        <taxon>Erwiniaceae</taxon>
        <taxon>Buchnera</taxon>
    </lineage>
</organism>
<name>LEU3_BUCTS</name>
<dbReference type="EC" id="1.1.1.85" evidence="1"/>
<dbReference type="EMBL" id="Y11966">
    <property type="protein sequence ID" value="CAA72702.1"/>
    <property type="molecule type" value="Genomic_DNA"/>
</dbReference>
<dbReference type="SMR" id="O31292"/>
<dbReference type="UniPathway" id="UPA00048">
    <property type="reaction ID" value="UER00072"/>
</dbReference>
<dbReference type="GO" id="GO:0005829">
    <property type="term" value="C:cytosol"/>
    <property type="evidence" value="ECO:0007669"/>
    <property type="project" value="TreeGrafter"/>
</dbReference>
<dbReference type="GO" id="GO:0003862">
    <property type="term" value="F:3-isopropylmalate dehydrogenase activity"/>
    <property type="evidence" value="ECO:0007669"/>
    <property type="project" value="UniProtKB-UniRule"/>
</dbReference>
<dbReference type="GO" id="GO:0000287">
    <property type="term" value="F:magnesium ion binding"/>
    <property type="evidence" value="ECO:0007669"/>
    <property type="project" value="InterPro"/>
</dbReference>
<dbReference type="GO" id="GO:0051287">
    <property type="term" value="F:NAD binding"/>
    <property type="evidence" value="ECO:0007669"/>
    <property type="project" value="InterPro"/>
</dbReference>
<dbReference type="GO" id="GO:0009098">
    <property type="term" value="P:L-leucine biosynthetic process"/>
    <property type="evidence" value="ECO:0007669"/>
    <property type="project" value="UniProtKB-UniRule"/>
</dbReference>
<dbReference type="FunFam" id="3.40.718.10:FF:000006">
    <property type="entry name" value="3-isopropylmalate dehydrogenase"/>
    <property type="match status" value="1"/>
</dbReference>
<dbReference type="Gene3D" id="3.40.718.10">
    <property type="entry name" value="Isopropylmalate Dehydrogenase"/>
    <property type="match status" value="1"/>
</dbReference>
<dbReference type="HAMAP" id="MF_01033">
    <property type="entry name" value="LeuB_type1"/>
    <property type="match status" value="1"/>
</dbReference>
<dbReference type="InterPro" id="IPR019818">
    <property type="entry name" value="IsoCit/isopropylmalate_DH_CS"/>
</dbReference>
<dbReference type="InterPro" id="IPR024084">
    <property type="entry name" value="IsoPropMal-DH-like_dom"/>
</dbReference>
<dbReference type="InterPro" id="IPR004429">
    <property type="entry name" value="Isopropylmalate_DH"/>
</dbReference>
<dbReference type="NCBIfam" id="TIGR00169">
    <property type="entry name" value="leuB"/>
    <property type="match status" value="1"/>
</dbReference>
<dbReference type="PANTHER" id="PTHR42979">
    <property type="entry name" value="3-ISOPROPYLMALATE DEHYDROGENASE"/>
    <property type="match status" value="1"/>
</dbReference>
<dbReference type="PANTHER" id="PTHR42979:SF1">
    <property type="entry name" value="3-ISOPROPYLMALATE DEHYDROGENASE"/>
    <property type="match status" value="1"/>
</dbReference>
<dbReference type="Pfam" id="PF00180">
    <property type="entry name" value="Iso_dh"/>
    <property type="match status" value="1"/>
</dbReference>
<dbReference type="SMART" id="SM01329">
    <property type="entry name" value="Iso_dh"/>
    <property type="match status" value="1"/>
</dbReference>
<dbReference type="SUPFAM" id="SSF53659">
    <property type="entry name" value="Isocitrate/Isopropylmalate dehydrogenase-like"/>
    <property type="match status" value="1"/>
</dbReference>
<dbReference type="PROSITE" id="PS00470">
    <property type="entry name" value="IDH_IMDH"/>
    <property type="match status" value="1"/>
</dbReference>
<comment type="function">
    <text evidence="1">Catalyzes the oxidation of 3-carboxy-2-hydroxy-4-methylpentanoate (3-isopropylmalate) to 3-carboxy-4-methyl-2-oxopentanoate. The product decarboxylates to 4-methyl-2 oxopentanoate.</text>
</comment>
<comment type="catalytic activity">
    <reaction evidence="1">
        <text>(2R,3S)-3-isopropylmalate + NAD(+) = 4-methyl-2-oxopentanoate + CO2 + NADH</text>
        <dbReference type="Rhea" id="RHEA:32271"/>
        <dbReference type="ChEBI" id="CHEBI:16526"/>
        <dbReference type="ChEBI" id="CHEBI:17865"/>
        <dbReference type="ChEBI" id="CHEBI:35121"/>
        <dbReference type="ChEBI" id="CHEBI:57540"/>
        <dbReference type="ChEBI" id="CHEBI:57945"/>
        <dbReference type="EC" id="1.1.1.85"/>
    </reaction>
</comment>
<comment type="cofactor">
    <cofactor evidence="1">
        <name>Mg(2+)</name>
        <dbReference type="ChEBI" id="CHEBI:18420"/>
    </cofactor>
    <cofactor evidence="1">
        <name>Mn(2+)</name>
        <dbReference type="ChEBI" id="CHEBI:29035"/>
    </cofactor>
    <text evidence="1">Binds 1 Mg(2+) or Mn(2+) ion per subunit.</text>
</comment>
<comment type="pathway">
    <text evidence="1">Amino-acid biosynthesis; L-leucine biosynthesis; L-leucine from 3-methyl-2-oxobutanoate: step 3/4.</text>
</comment>
<comment type="subunit">
    <text evidence="1">Homodimer.</text>
</comment>
<comment type="subcellular location">
    <subcellularLocation>
        <location evidence="1">Cytoplasm</location>
    </subcellularLocation>
</comment>
<comment type="similarity">
    <text evidence="1">Belongs to the isocitrate and isopropylmalate dehydrogenases family. LeuB type 1 subfamily.</text>
</comment>
<geneLocation type="plasmid">
    <name>pBTs1</name>
</geneLocation>
<gene>
    <name evidence="1" type="primary">leuB</name>
</gene>
<evidence type="ECO:0000255" key="1">
    <source>
        <dbReference type="HAMAP-Rule" id="MF_01033"/>
    </source>
</evidence>
<accession>O31292</accession>